<name>RL25_NOSP7</name>
<gene>
    <name evidence="1" type="primary">rplY</name>
    <name evidence="1" type="synonym">ctc</name>
    <name type="ordered locus">Npun_F0613</name>
</gene>
<comment type="function">
    <text evidence="1">This is one of the proteins that binds to the 5S RNA in the ribosome where it forms part of the central protuberance.</text>
</comment>
<comment type="subunit">
    <text evidence="1">Part of the 50S ribosomal subunit; part of the 5S rRNA/L5/L18/L25 subcomplex. Contacts the 5S rRNA. Binds to the 5S rRNA independently of L5 and L18.</text>
</comment>
<comment type="similarity">
    <text evidence="1">Belongs to the bacterial ribosomal protein bL25 family. CTC subfamily.</text>
</comment>
<feature type="chain" id="PRO_1000142538" description="Large ribosomal subunit protein bL25">
    <location>
        <begin position="1"/>
        <end position="199"/>
    </location>
</feature>
<sequence length="199" mass="21394">MTITVESLKRPEGSKPRALRRSGLIPANLYGHKGTESISLTIEAKTVERLLKRVSVNNTLIELNIADAPWRGKALLRELQIHPAKGTPYHLSFFAVAGHGDTTVEVRLRFVGTAVGVKQEGGVLDTVITELQVSCAPENIPDVIEIDVTNLQIGDSLSISDIPFPEGVTPLAELERLVVSVLPPQISADDAGTETETAS</sequence>
<organism>
    <name type="scientific">Nostoc punctiforme (strain ATCC 29133 / PCC 73102)</name>
    <dbReference type="NCBI Taxonomy" id="63737"/>
    <lineage>
        <taxon>Bacteria</taxon>
        <taxon>Bacillati</taxon>
        <taxon>Cyanobacteriota</taxon>
        <taxon>Cyanophyceae</taxon>
        <taxon>Nostocales</taxon>
        <taxon>Nostocaceae</taxon>
        <taxon>Nostoc</taxon>
    </lineage>
</organism>
<dbReference type="EMBL" id="CP001037">
    <property type="protein sequence ID" value="ACC79367.1"/>
    <property type="molecule type" value="Genomic_DNA"/>
</dbReference>
<dbReference type="RefSeq" id="WP_012407392.1">
    <property type="nucleotide sequence ID" value="NC_010628.1"/>
</dbReference>
<dbReference type="SMR" id="B2J8B8"/>
<dbReference type="STRING" id="63737.Npun_F0613"/>
<dbReference type="EnsemblBacteria" id="ACC79367">
    <property type="protein sequence ID" value="ACC79367"/>
    <property type="gene ID" value="Npun_F0613"/>
</dbReference>
<dbReference type="KEGG" id="npu:Npun_F0613"/>
<dbReference type="eggNOG" id="COG1825">
    <property type="taxonomic scope" value="Bacteria"/>
</dbReference>
<dbReference type="HOGENOM" id="CLU_075939_2_0_3"/>
<dbReference type="OrthoDB" id="9786489at2"/>
<dbReference type="PhylomeDB" id="B2J8B8"/>
<dbReference type="Proteomes" id="UP000001191">
    <property type="component" value="Chromosome"/>
</dbReference>
<dbReference type="GO" id="GO:0022625">
    <property type="term" value="C:cytosolic large ribosomal subunit"/>
    <property type="evidence" value="ECO:0007669"/>
    <property type="project" value="TreeGrafter"/>
</dbReference>
<dbReference type="GO" id="GO:0008097">
    <property type="term" value="F:5S rRNA binding"/>
    <property type="evidence" value="ECO:0007669"/>
    <property type="project" value="InterPro"/>
</dbReference>
<dbReference type="GO" id="GO:0003735">
    <property type="term" value="F:structural constituent of ribosome"/>
    <property type="evidence" value="ECO:0007669"/>
    <property type="project" value="InterPro"/>
</dbReference>
<dbReference type="GO" id="GO:0006412">
    <property type="term" value="P:translation"/>
    <property type="evidence" value="ECO:0007669"/>
    <property type="project" value="UniProtKB-UniRule"/>
</dbReference>
<dbReference type="CDD" id="cd00495">
    <property type="entry name" value="Ribosomal_L25_TL5_CTC"/>
    <property type="match status" value="1"/>
</dbReference>
<dbReference type="Gene3D" id="2.170.120.20">
    <property type="entry name" value="Ribosomal protein L25, beta domain"/>
    <property type="match status" value="1"/>
</dbReference>
<dbReference type="Gene3D" id="2.40.240.10">
    <property type="entry name" value="Ribosomal Protein L25, Chain P"/>
    <property type="match status" value="1"/>
</dbReference>
<dbReference type="HAMAP" id="MF_01334">
    <property type="entry name" value="Ribosomal_bL25_CTC"/>
    <property type="match status" value="1"/>
</dbReference>
<dbReference type="InterPro" id="IPR020056">
    <property type="entry name" value="Rbsml_bL25/Gln-tRNA_synth_N"/>
</dbReference>
<dbReference type="InterPro" id="IPR011035">
    <property type="entry name" value="Ribosomal_bL25/Gln-tRNA_synth"/>
</dbReference>
<dbReference type="InterPro" id="IPR020057">
    <property type="entry name" value="Ribosomal_bL25_b-dom"/>
</dbReference>
<dbReference type="InterPro" id="IPR037121">
    <property type="entry name" value="Ribosomal_bL25_C"/>
</dbReference>
<dbReference type="InterPro" id="IPR001021">
    <property type="entry name" value="Ribosomal_bL25_long"/>
</dbReference>
<dbReference type="InterPro" id="IPR029751">
    <property type="entry name" value="Ribosomal_L25_dom"/>
</dbReference>
<dbReference type="InterPro" id="IPR020930">
    <property type="entry name" value="Ribosomal_uL5_bac-type"/>
</dbReference>
<dbReference type="NCBIfam" id="TIGR00731">
    <property type="entry name" value="bL25_bact_ctc"/>
    <property type="match status" value="1"/>
</dbReference>
<dbReference type="NCBIfam" id="NF004139">
    <property type="entry name" value="PRK05618.4-2"/>
    <property type="match status" value="1"/>
</dbReference>
<dbReference type="NCBIfam" id="NF004612">
    <property type="entry name" value="PRK05943.1"/>
    <property type="match status" value="1"/>
</dbReference>
<dbReference type="PANTHER" id="PTHR33284">
    <property type="entry name" value="RIBOSOMAL PROTEIN L25/GLN-TRNA SYNTHETASE, ANTI-CODON-BINDING DOMAIN-CONTAINING PROTEIN"/>
    <property type="match status" value="1"/>
</dbReference>
<dbReference type="PANTHER" id="PTHR33284:SF1">
    <property type="entry name" value="RIBOSOMAL PROTEIN L25_GLN-TRNA SYNTHETASE, ANTI-CODON-BINDING DOMAIN-CONTAINING PROTEIN"/>
    <property type="match status" value="1"/>
</dbReference>
<dbReference type="Pfam" id="PF01386">
    <property type="entry name" value="Ribosomal_L25p"/>
    <property type="match status" value="1"/>
</dbReference>
<dbReference type="Pfam" id="PF14693">
    <property type="entry name" value="Ribosomal_TL5_C"/>
    <property type="match status" value="1"/>
</dbReference>
<dbReference type="SUPFAM" id="SSF50715">
    <property type="entry name" value="Ribosomal protein L25-like"/>
    <property type="match status" value="1"/>
</dbReference>
<reference key="1">
    <citation type="journal article" date="2013" name="Plant Physiol.">
        <title>A Nostoc punctiforme Sugar Transporter Necessary to Establish a Cyanobacterium-Plant Symbiosis.</title>
        <authorList>
            <person name="Ekman M."/>
            <person name="Picossi S."/>
            <person name="Campbell E.L."/>
            <person name="Meeks J.C."/>
            <person name="Flores E."/>
        </authorList>
    </citation>
    <scope>NUCLEOTIDE SEQUENCE [LARGE SCALE GENOMIC DNA]</scope>
    <source>
        <strain>ATCC 29133 / PCC 73102</strain>
    </source>
</reference>
<evidence type="ECO:0000255" key="1">
    <source>
        <dbReference type="HAMAP-Rule" id="MF_01334"/>
    </source>
</evidence>
<evidence type="ECO:0000305" key="2"/>
<protein>
    <recommendedName>
        <fullName evidence="1">Large ribosomal subunit protein bL25</fullName>
    </recommendedName>
    <alternativeName>
        <fullName evidence="2">50S ribosomal protein L25</fullName>
    </alternativeName>
    <alternativeName>
        <fullName evidence="1">General stress protein CTC</fullName>
    </alternativeName>
</protein>
<accession>B2J8B8</accession>
<proteinExistence type="inferred from homology"/>
<keyword id="KW-1185">Reference proteome</keyword>
<keyword id="KW-0687">Ribonucleoprotein</keyword>
<keyword id="KW-0689">Ribosomal protein</keyword>
<keyword id="KW-0694">RNA-binding</keyword>
<keyword id="KW-0699">rRNA-binding</keyword>